<comment type="function">
    <text evidence="1">One of two assembly initiator proteins, it binds directly to the 5'-end of the 23S rRNA, where it nucleates assembly of the 50S subunit.</text>
</comment>
<comment type="function">
    <text evidence="1">One of the proteins that surrounds the polypeptide exit tunnel on the outside of the subunit.</text>
</comment>
<comment type="subunit">
    <text evidence="1">Part of the 50S ribosomal subunit.</text>
</comment>
<comment type="similarity">
    <text evidence="1">Belongs to the universal ribosomal protein uL24 family.</text>
</comment>
<gene>
    <name evidence="1" type="primary">rplX</name>
    <name type="ordered locus">XF_1163</name>
</gene>
<reference key="1">
    <citation type="journal article" date="2000" name="Nature">
        <title>The genome sequence of the plant pathogen Xylella fastidiosa.</title>
        <authorList>
            <person name="Simpson A.J.G."/>
            <person name="Reinach F.C."/>
            <person name="Arruda P."/>
            <person name="Abreu F.A."/>
            <person name="Acencio M."/>
            <person name="Alvarenga R."/>
            <person name="Alves L.M.C."/>
            <person name="Araya J.E."/>
            <person name="Baia G.S."/>
            <person name="Baptista C.S."/>
            <person name="Barros M.H."/>
            <person name="Bonaccorsi E.D."/>
            <person name="Bordin S."/>
            <person name="Bove J.M."/>
            <person name="Briones M.R.S."/>
            <person name="Bueno M.R.P."/>
            <person name="Camargo A.A."/>
            <person name="Camargo L.E.A."/>
            <person name="Carraro D.M."/>
            <person name="Carrer H."/>
            <person name="Colauto N.B."/>
            <person name="Colombo C."/>
            <person name="Costa F.F."/>
            <person name="Costa M.C.R."/>
            <person name="Costa-Neto C.M."/>
            <person name="Coutinho L.L."/>
            <person name="Cristofani M."/>
            <person name="Dias-Neto E."/>
            <person name="Docena C."/>
            <person name="El-Dorry H."/>
            <person name="Facincani A.P."/>
            <person name="Ferreira A.J.S."/>
            <person name="Ferreira V.C.A."/>
            <person name="Ferro J.A."/>
            <person name="Fraga J.S."/>
            <person name="Franca S.C."/>
            <person name="Franco M.C."/>
            <person name="Frohme M."/>
            <person name="Furlan L.R."/>
            <person name="Garnier M."/>
            <person name="Goldman G.H."/>
            <person name="Goldman M.H.S."/>
            <person name="Gomes S.L."/>
            <person name="Gruber A."/>
            <person name="Ho P.L."/>
            <person name="Hoheisel J.D."/>
            <person name="Junqueira M.L."/>
            <person name="Kemper E.L."/>
            <person name="Kitajima J.P."/>
            <person name="Krieger J.E."/>
            <person name="Kuramae E.E."/>
            <person name="Laigret F."/>
            <person name="Lambais M.R."/>
            <person name="Leite L.C.C."/>
            <person name="Lemos E.G.M."/>
            <person name="Lemos M.V.F."/>
            <person name="Lopes S.A."/>
            <person name="Lopes C.R."/>
            <person name="Machado J.A."/>
            <person name="Machado M.A."/>
            <person name="Madeira A.M.B.N."/>
            <person name="Madeira H.M.F."/>
            <person name="Marino C.L."/>
            <person name="Marques M.V."/>
            <person name="Martins E.A.L."/>
            <person name="Martins E.M.F."/>
            <person name="Matsukuma A.Y."/>
            <person name="Menck C.F.M."/>
            <person name="Miracca E.C."/>
            <person name="Miyaki C.Y."/>
            <person name="Monteiro-Vitorello C.B."/>
            <person name="Moon D.H."/>
            <person name="Nagai M.A."/>
            <person name="Nascimento A.L.T.O."/>
            <person name="Netto L.E.S."/>
            <person name="Nhani A. Jr."/>
            <person name="Nobrega F.G."/>
            <person name="Nunes L.R."/>
            <person name="Oliveira M.A."/>
            <person name="de Oliveira M.C."/>
            <person name="de Oliveira R.C."/>
            <person name="Palmieri D.A."/>
            <person name="Paris A."/>
            <person name="Peixoto B.R."/>
            <person name="Pereira G.A.G."/>
            <person name="Pereira H.A. Jr."/>
            <person name="Pesquero J.B."/>
            <person name="Quaggio R.B."/>
            <person name="Roberto P.G."/>
            <person name="Rodrigues V."/>
            <person name="de Rosa A.J.M."/>
            <person name="de Rosa V.E. Jr."/>
            <person name="de Sa R.G."/>
            <person name="Santelli R.V."/>
            <person name="Sawasaki H.E."/>
            <person name="da Silva A.C.R."/>
            <person name="da Silva A.M."/>
            <person name="da Silva F.R."/>
            <person name="Silva W.A. Jr."/>
            <person name="da Silveira J.F."/>
            <person name="Silvestri M.L.Z."/>
            <person name="Siqueira W.J."/>
            <person name="de Souza A.A."/>
            <person name="de Souza A.P."/>
            <person name="Terenzi M.F."/>
            <person name="Truffi D."/>
            <person name="Tsai S.M."/>
            <person name="Tsuhako M.H."/>
            <person name="Vallada H."/>
            <person name="Van Sluys M.A."/>
            <person name="Verjovski-Almeida S."/>
            <person name="Vettore A.L."/>
            <person name="Zago M.A."/>
            <person name="Zatz M."/>
            <person name="Meidanis J."/>
            <person name="Setubal J.C."/>
        </authorList>
    </citation>
    <scope>NUCLEOTIDE SEQUENCE [LARGE SCALE GENOMIC DNA]</scope>
    <source>
        <strain>9a5c</strain>
    </source>
</reference>
<name>RL24_XYLFA</name>
<feature type="chain" id="PRO_0000130756" description="Large ribosomal subunit protein uL24">
    <location>
        <begin position="1"/>
        <end position="105"/>
    </location>
</feature>
<protein>
    <recommendedName>
        <fullName evidence="1">Large ribosomal subunit protein uL24</fullName>
    </recommendedName>
    <alternativeName>
        <fullName evidence="2">50S ribosomal protein L24</fullName>
    </alternativeName>
</protein>
<dbReference type="EMBL" id="AE003849">
    <property type="protein sequence ID" value="AAF83973.1"/>
    <property type="molecule type" value="Genomic_DNA"/>
</dbReference>
<dbReference type="PIR" id="C82718">
    <property type="entry name" value="C82718"/>
</dbReference>
<dbReference type="RefSeq" id="WP_010893677.1">
    <property type="nucleotide sequence ID" value="NC_002488.3"/>
</dbReference>
<dbReference type="SMR" id="Q9PE65"/>
<dbReference type="STRING" id="160492.XF_1163"/>
<dbReference type="KEGG" id="xfa:XF_1163"/>
<dbReference type="eggNOG" id="COG0198">
    <property type="taxonomic scope" value="Bacteria"/>
</dbReference>
<dbReference type="HOGENOM" id="CLU_093315_2_2_6"/>
<dbReference type="Proteomes" id="UP000000812">
    <property type="component" value="Chromosome"/>
</dbReference>
<dbReference type="GO" id="GO:1990904">
    <property type="term" value="C:ribonucleoprotein complex"/>
    <property type="evidence" value="ECO:0007669"/>
    <property type="project" value="UniProtKB-KW"/>
</dbReference>
<dbReference type="GO" id="GO:0005840">
    <property type="term" value="C:ribosome"/>
    <property type="evidence" value="ECO:0007669"/>
    <property type="project" value="UniProtKB-KW"/>
</dbReference>
<dbReference type="GO" id="GO:0019843">
    <property type="term" value="F:rRNA binding"/>
    <property type="evidence" value="ECO:0007669"/>
    <property type="project" value="UniProtKB-UniRule"/>
</dbReference>
<dbReference type="GO" id="GO:0003735">
    <property type="term" value="F:structural constituent of ribosome"/>
    <property type="evidence" value="ECO:0007669"/>
    <property type="project" value="InterPro"/>
</dbReference>
<dbReference type="GO" id="GO:0006412">
    <property type="term" value="P:translation"/>
    <property type="evidence" value="ECO:0007669"/>
    <property type="project" value="UniProtKB-UniRule"/>
</dbReference>
<dbReference type="CDD" id="cd06089">
    <property type="entry name" value="KOW_RPL26"/>
    <property type="match status" value="1"/>
</dbReference>
<dbReference type="FunFam" id="2.30.30.30:FF:000004">
    <property type="entry name" value="50S ribosomal protein L24"/>
    <property type="match status" value="1"/>
</dbReference>
<dbReference type="Gene3D" id="2.30.30.30">
    <property type="match status" value="1"/>
</dbReference>
<dbReference type="HAMAP" id="MF_01326_B">
    <property type="entry name" value="Ribosomal_uL24_B"/>
    <property type="match status" value="1"/>
</dbReference>
<dbReference type="InterPro" id="IPR005824">
    <property type="entry name" value="KOW"/>
</dbReference>
<dbReference type="InterPro" id="IPR014722">
    <property type="entry name" value="Rib_uL2_dom2"/>
</dbReference>
<dbReference type="InterPro" id="IPR003256">
    <property type="entry name" value="Ribosomal_uL24"/>
</dbReference>
<dbReference type="InterPro" id="IPR005825">
    <property type="entry name" value="Ribosomal_uL24_CS"/>
</dbReference>
<dbReference type="InterPro" id="IPR041988">
    <property type="entry name" value="Ribosomal_uL24_KOW"/>
</dbReference>
<dbReference type="InterPro" id="IPR008991">
    <property type="entry name" value="Translation_prot_SH3-like_sf"/>
</dbReference>
<dbReference type="NCBIfam" id="TIGR01079">
    <property type="entry name" value="rplX_bact"/>
    <property type="match status" value="1"/>
</dbReference>
<dbReference type="PANTHER" id="PTHR12903">
    <property type="entry name" value="MITOCHONDRIAL RIBOSOMAL PROTEIN L24"/>
    <property type="match status" value="1"/>
</dbReference>
<dbReference type="Pfam" id="PF00467">
    <property type="entry name" value="KOW"/>
    <property type="match status" value="1"/>
</dbReference>
<dbReference type="Pfam" id="PF17136">
    <property type="entry name" value="ribosomal_L24"/>
    <property type="match status" value="1"/>
</dbReference>
<dbReference type="SMART" id="SM00739">
    <property type="entry name" value="KOW"/>
    <property type="match status" value="1"/>
</dbReference>
<dbReference type="SUPFAM" id="SSF50104">
    <property type="entry name" value="Translation proteins SH3-like domain"/>
    <property type="match status" value="1"/>
</dbReference>
<dbReference type="PROSITE" id="PS01108">
    <property type="entry name" value="RIBOSOMAL_L24"/>
    <property type="match status" value="1"/>
</dbReference>
<sequence length="105" mass="11420">MASRIKKGDQVIVIAGKDKGKQGEIIRIDGHRVVVSNVNIVKRHTKPNPQRSISGGLIDREAPIHVSNIQVLNPMTGKGDRVGFKILDDGCKLRIFRSTGEVIGA</sequence>
<proteinExistence type="inferred from homology"/>
<evidence type="ECO:0000255" key="1">
    <source>
        <dbReference type="HAMAP-Rule" id="MF_01326"/>
    </source>
</evidence>
<evidence type="ECO:0000305" key="2"/>
<organism>
    <name type="scientific">Xylella fastidiosa (strain 9a5c)</name>
    <dbReference type="NCBI Taxonomy" id="160492"/>
    <lineage>
        <taxon>Bacteria</taxon>
        <taxon>Pseudomonadati</taxon>
        <taxon>Pseudomonadota</taxon>
        <taxon>Gammaproteobacteria</taxon>
        <taxon>Lysobacterales</taxon>
        <taxon>Lysobacteraceae</taxon>
        <taxon>Xylella</taxon>
    </lineage>
</organism>
<accession>Q9PE65</accession>
<keyword id="KW-0687">Ribonucleoprotein</keyword>
<keyword id="KW-0689">Ribosomal protein</keyword>
<keyword id="KW-0694">RNA-binding</keyword>
<keyword id="KW-0699">rRNA-binding</keyword>